<sequence length="36" mass="3977">GLGRPSRECIEGSEPCEVFRPYTCCSGHCIIFVCAR</sequence>
<reference key="1">
    <citation type="journal article" date="2011" name="Toxicon">
        <title>Diversity of conotoxin types from Conus californicus reflects a diversity of prey types and a novel evolutionary history.</title>
        <authorList>
            <person name="Elliger C.A."/>
            <person name="Richmond T.A."/>
            <person name="Lebaric Z.N."/>
            <person name="Pierce N.T."/>
            <person name="Sweedler J.V."/>
            <person name="Gilly W.F."/>
        </authorList>
    </citation>
    <scope>NUCLEOTIDE SEQUENCE [MRNA]</scope>
    <source>
        <tissue>Venom duct</tissue>
    </source>
</reference>
<accession>D2Y4A2</accession>
<dbReference type="EMBL" id="GU306167">
    <property type="protein sequence ID" value="ADB04245.1"/>
    <property type="molecule type" value="mRNA"/>
</dbReference>
<dbReference type="SMR" id="D2Y4A2"/>
<dbReference type="ConoServer" id="3976">
    <property type="toxin name" value="Cal6.1h precursor"/>
</dbReference>
<dbReference type="GO" id="GO:0005576">
    <property type="term" value="C:extracellular region"/>
    <property type="evidence" value="ECO:0007669"/>
    <property type="project" value="UniProtKB-SubCell"/>
</dbReference>
<dbReference type="GO" id="GO:0099106">
    <property type="term" value="F:ion channel regulator activity"/>
    <property type="evidence" value="ECO:0007669"/>
    <property type="project" value="UniProtKB-KW"/>
</dbReference>
<dbReference type="GO" id="GO:0090729">
    <property type="term" value="F:toxin activity"/>
    <property type="evidence" value="ECO:0007669"/>
    <property type="project" value="UniProtKB-KW"/>
</dbReference>
<name>O161H_CONCL</name>
<organism>
    <name type="scientific">Californiconus californicus</name>
    <name type="common">California cone</name>
    <name type="synonym">Conus californicus</name>
    <dbReference type="NCBI Taxonomy" id="1736779"/>
    <lineage>
        <taxon>Eukaryota</taxon>
        <taxon>Metazoa</taxon>
        <taxon>Spiralia</taxon>
        <taxon>Lophotrochozoa</taxon>
        <taxon>Mollusca</taxon>
        <taxon>Gastropoda</taxon>
        <taxon>Caenogastropoda</taxon>
        <taxon>Neogastropoda</taxon>
        <taxon>Conoidea</taxon>
        <taxon>Conidae</taxon>
        <taxon>Californiconus</taxon>
    </lineage>
</organism>
<protein>
    <recommendedName>
        <fullName evidence="2">Conotoxin Cal6.1h</fullName>
    </recommendedName>
</protein>
<keyword id="KW-1015">Disulfide bond</keyword>
<keyword id="KW-0872">Ion channel impairing toxin</keyword>
<keyword id="KW-0960">Knottin</keyword>
<keyword id="KW-0528">Neurotoxin</keyword>
<keyword id="KW-0964">Secreted</keyword>
<keyword id="KW-0800">Toxin</keyword>
<proteinExistence type="evidence at transcript level"/>
<comment type="function">
    <text evidence="3">Probable neurotoxin with unknown target. Possibly targets ion channels.</text>
</comment>
<comment type="subcellular location">
    <subcellularLocation>
        <location evidence="4">Secreted</location>
    </subcellularLocation>
</comment>
<comment type="tissue specificity">
    <text evidence="4">Expressed by the venom duct.</text>
</comment>
<comment type="domain">
    <text evidence="1">The presence of a 'disulfide through disulfide knot' structurally defines this protein as a knottin.</text>
</comment>
<comment type="domain">
    <text>The cysteine framework is VI/VII (C-C-CC-C-C).</text>
</comment>
<comment type="similarity">
    <text evidence="3">Belongs to the conotoxin O1 superfamily.</text>
</comment>
<evidence type="ECO:0000250" key="1"/>
<evidence type="ECO:0000303" key="2">
    <source>
    </source>
</evidence>
<evidence type="ECO:0000305" key="3"/>
<evidence type="ECO:0000305" key="4">
    <source>
    </source>
</evidence>
<feature type="propeptide" id="PRO_5000566328" evidence="4">
    <location>
        <begin position="1" status="less than"/>
        <end position="7"/>
    </location>
</feature>
<feature type="peptide" id="PRO_5000566329" description="Conotoxin Cal6.1h" evidence="4">
    <location>
        <begin position="8"/>
        <end position="35"/>
    </location>
</feature>
<feature type="disulfide bond" evidence="1">
    <location>
        <begin position="9"/>
        <end position="25"/>
    </location>
</feature>
<feature type="disulfide bond" evidence="1">
    <location>
        <begin position="16"/>
        <end position="29"/>
    </location>
</feature>
<feature type="disulfide bond" evidence="1">
    <location>
        <begin position="24"/>
        <end position="34"/>
    </location>
</feature>
<feature type="non-terminal residue">
    <location>
        <position position="1"/>
    </location>
</feature>